<name>Y442_CHLPN</name>
<organism>
    <name type="scientific">Chlamydia pneumoniae</name>
    <name type="common">Chlamydophila pneumoniae</name>
    <dbReference type="NCBI Taxonomy" id="83558"/>
    <lineage>
        <taxon>Bacteria</taxon>
        <taxon>Pseudomonadati</taxon>
        <taxon>Chlamydiota</taxon>
        <taxon>Chlamydiia</taxon>
        <taxon>Chlamydiales</taxon>
        <taxon>Chlamydiaceae</taxon>
        <taxon>Chlamydia/Chlamydophila group</taxon>
        <taxon>Chlamydia</taxon>
    </lineage>
</organism>
<comment type="subcellular location">
    <subcellularLocation>
        <location evidence="2">Cell membrane</location>
        <topology evidence="2">Multi-pass membrane protein</topology>
    </subcellularLocation>
</comment>
<comment type="similarity">
    <text evidence="2">Belongs to the chlamydial CPn_0442/CT_006/TC_0274 family.</text>
</comment>
<sequence>MGFKNICKQGSQLYLNGIFPERILARKLKNCAKSYPRTALTIEVLVSSVLGALKVILIPCASTYAALTLPLRALFNAIKTKSCQHLASYAMAWLLNILTIAVIIGLVFSLVFIPPPVVFISLGLLMSVTTSVTLFQVHKNLFPPYEPPPSRPHTPPPFADEYVPLISESYFD</sequence>
<gene>
    <name type="ordered locus">CPn_0442</name>
    <name type="ordered locus">CP_0311</name>
    <name type="ordered locus">CPj0442</name>
    <name type="ordered locus">CpB0458</name>
</gene>
<dbReference type="EMBL" id="AE001363">
    <property type="protein sequence ID" value="AAD18586.1"/>
    <property type="molecule type" value="Genomic_DNA"/>
</dbReference>
<dbReference type="EMBL" id="AE002161">
    <property type="protein sequence ID" value="AAF38168.1"/>
    <property type="molecule type" value="Genomic_DNA"/>
</dbReference>
<dbReference type="EMBL" id="BA000008">
    <property type="protein sequence ID" value="BAA98650.1"/>
    <property type="molecule type" value="Genomic_DNA"/>
</dbReference>
<dbReference type="EMBL" id="AE009440">
    <property type="protein sequence ID" value="AAP98389.1"/>
    <property type="molecule type" value="Genomic_DNA"/>
</dbReference>
<dbReference type="PIR" id="C81590">
    <property type="entry name" value="C81590"/>
</dbReference>
<dbReference type="PIR" id="H72077">
    <property type="entry name" value="H72077"/>
</dbReference>
<dbReference type="PIR" id="H86545">
    <property type="entry name" value="H86545"/>
</dbReference>
<dbReference type="RefSeq" id="NP_224642.1">
    <property type="nucleotide sequence ID" value="NC_000922.1"/>
</dbReference>
<dbReference type="RefSeq" id="WP_010883085.1">
    <property type="nucleotide sequence ID" value="NZ_LN847257.1"/>
</dbReference>
<dbReference type="SMR" id="Q9Z8A1"/>
<dbReference type="STRING" id="406984.CPK_ORF00954"/>
<dbReference type="GeneID" id="45050489"/>
<dbReference type="KEGG" id="cpa:CP_0311"/>
<dbReference type="KEGG" id="cpj:CPj0442"/>
<dbReference type="KEGG" id="cpn:CPn_0442"/>
<dbReference type="KEGG" id="cpt:CpB0458"/>
<dbReference type="PATRIC" id="fig|115713.3.peg.489"/>
<dbReference type="HOGENOM" id="CLU_132525_0_0_0"/>
<dbReference type="OrthoDB" id="18021at2"/>
<dbReference type="Proteomes" id="UP000000583">
    <property type="component" value="Chromosome"/>
</dbReference>
<dbReference type="Proteomes" id="UP000000801">
    <property type="component" value="Chromosome"/>
</dbReference>
<dbReference type="GO" id="GO:0005886">
    <property type="term" value="C:plasma membrane"/>
    <property type="evidence" value="ECO:0007669"/>
    <property type="project" value="UniProtKB-SubCell"/>
</dbReference>
<dbReference type="InterPro" id="IPR035358">
    <property type="entry name" value="DUF5422"/>
</dbReference>
<dbReference type="Pfam" id="PF17459">
    <property type="entry name" value="DUF5422"/>
    <property type="match status" value="1"/>
</dbReference>
<proteinExistence type="inferred from homology"/>
<keyword id="KW-1003">Cell membrane</keyword>
<keyword id="KW-0472">Membrane</keyword>
<keyword id="KW-0812">Transmembrane</keyword>
<keyword id="KW-1133">Transmembrane helix</keyword>
<evidence type="ECO:0000255" key="1"/>
<evidence type="ECO:0000305" key="2"/>
<feature type="chain" id="PRO_0000218383" description="Uncharacterized protein CPn_0442/CP_0311/CPj0442/CpB0458">
    <location>
        <begin position="1"/>
        <end position="172"/>
    </location>
</feature>
<feature type="transmembrane region" description="Helical" evidence="1">
    <location>
        <begin position="44"/>
        <end position="68"/>
    </location>
</feature>
<feature type="transmembrane region" description="Helical" evidence="1">
    <location>
        <begin position="86"/>
        <end position="110"/>
    </location>
</feature>
<feature type="transmembrane region" description="Helical" evidence="1">
    <location>
        <begin position="117"/>
        <end position="135"/>
    </location>
</feature>
<feature type="sequence variant" description="In strain: CWL029 and TW-183.">
    <original>N</original>
    <variation>H</variation>
    <location>
        <position position="96"/>
    </location>
</feature>
<accession>Q9Z8A1</accession>
<accession>Q9JS08</accession>
<protein>
    <recommendedName>
        <fullName>Uncharacterized protein CPn_0442/CP_0311/CPj0442/CpB0458</fullName>
    </recommendedName>
</protein>
<reference key="1">
    <citation type="journal article" date="1999" name="Nat. Genet.">
        <title>Comparative genomes of Chlamydia pneumoniae and C. trachomatis.</title>
        <authorList>
            <person name="Kalman S."/>
            <person name="Mitchell W.P."/>
            <person name="Marathe R."/>
            <person name="Lammel C.J."/>
            <person name="Fan J."/>
            <person name="Hyman R.W."/>
            <person name="Olinger L."/>
            <person name="Grimwood J."/>
            <person name="Davis R.W."/>
            <person name="Stephens R.S."/>
        </authorList>
    </citation>
    <scope>NUCLEOTIDE SEQUENCE [LARGE SCALE GENOMIC DNA]</scope>
    <source>
        <strain>CWL029</strain>
    </source>
</reference>
<reference key="2">
    <citation type="journal article" date="2000" name="Nucleic Acids Res.">
        <title>Genome sequences of Chlamydia trachomatis MoPn and Chlamydia pneumoniae AR39.</title>
        <authorList>
            <person name="Read T.D."/>
            <person name="Brunham R.C."/>
            <person name="Shen C."/>
            <person name="Gill S.R."/>
            <person name="Heidelberg J.F."/>
            <person name="White O."/>
            <person name="Hickey E.K."/>
            <person name="Peterson J.D."/>
            <person name="Utterback T.R."/>
            <person name="Berry K.J."/>
            <person name="Bass S."/>
            <person name="Linher K.D."/>
            <person name="Weidman J.F."/>
            <person name="Khouri H.M."/>
            <person name="Craven B."/>
            <person name="Bowman C."/>
            <person name="Dodson R.J."/>
            <person name="Gwinn M.L."/>
            <person name="Nelson W.C."/>
            <person name="DeBoy R.T."/>
            <person name="Kolonay J.F."/>
            <person name="McClarty G."/>
            <person name="Salzberg S.L."/>
            <person name="Eisen J.A."/>
            <person name="Fraser C.M."/>
        </authorList>
    </citation>
    <scope>NUCLEOTIDE SEQUENCE [LARGE SCALE GENOMIC DNA]</scope>
    <source>
        <strain>AR39</strain>
    </source>
</reference>
<reference key="3">
    <citation type="journal article" date="2000" name="Nucleic Acids Res.">
        <title>Comparison of whole genome sequences of Chlamydia pneumoniae J138 from Japan and CWL029 from USA.</title>
        <authorList>
            <person name="Shirai M."/>
            <person name="Hirakawa H."/>
            <person name="Kimoto M."/>
            <person name="Tabuchi M."/>
            <person name="Kishi F."/>
            <person name="Ouchi K."/>
            <person name="Shiba T."/>
            <person name="Ishii K."/>
            <person name="Hattori M."/>
            <person name="Kuhara S."/>
            <person name="Nakazawa T."/>
        </authorList>
    </citation>
    <scope>NUCLEOTIDE SEQUENCE [LARGE SCALE GENOMIC DNA]</scope>
    <source>
        <strain>J138</strain>
    </source>
</reference>
<reference key="4">
    <citation type="submission" date="2002-05" db="EMBL/GenBank/DDBJ databases">
        <title>The genome sequence of Chlamydia pneumoniae TW183 and comparison with other Chlamydia strains based on whole genome sequence analysis.</title>
        <authorList>
            <person name="Geng M.M."/>
            <person name="Schuhmacher A."/>
            <person name="Muehldorfer I."/>
            <person name="Bensch K.W."/>
            <person name="Schaefer K.P."/>
            <person name="Schneider S."/>
            <person name="Pohl T."/>
            <person name="Essig A."/>
            <person name="Marre R."/>
            <person name="Melchers K."/>
        </authorList>
    </citation>
    <scope>NUCLEOTIDE SEQUENCE [LARGE SCALE GENOMIC DNA]</scope>
    <source>
        <strain>TW-183</strain>
    </source>
</reference>